<name>MEIOB_RAT</name>
<protein>
    <recommendedName>
        <fullName evidence="3">Meiosis-specific with OB domain-containing protein</fullName>
        <ecNumber>3.1.-.-</ecNumber>
    </recommendedName>
</protein>
<reference key="1">
    <citation type="journal article" date="2004" name="Genome Res.">
        <title>The status, quality, and expansion of the NIH full-length cDNA project: the Mammalian Gene Collection (MGC).</title>
        <authorList>
            <consortium name="The MGC Project Team"/>
        </authorList>
    </citation>
    <scope>NUCLEOTIDE SEQUENCE [LARGE SCALE MRNA]</scope>
    <source>
        <tissue>Testis</tissue>
    </source>
</reference>
<proteinExistence type="evidence at transcript level"/>
<dbReference type="EC" id="3.1.-.-"/>
<dbReference type="EMBL" id="BC158604">
    <property type="protein sequence ID" value="AAI58605.1"/>
    <property type="molecule type" value="mRNA"/>
</dbReference>
<dbReference type="RefSeq" id="NP_001108505.1">
    <property type="nucleotide sequence ID" value="NM_001115033.1"/>
</dbReference>
<dbReference type="RefSeq" id="XP_006246093.1">
    <property type="nucleotide sequence ID" value="XM_006246031.5"/>
</dbReference>
<dbReference type="SMR" id="B0BMX9"/>
<dbReference type="FunCoup" id="B0BMX9">
    <property type="interactions" value="10"/>
</dbReference>
<dbReference type="STRING" id="10116.ENSRNOP00000057290"/>
<dbReference type="GlyGen" id="B0BMX9">
    <property type="glycosylation" value="1 site"/>
</dbReference>
<dbReference type="PhosphoSitePlus" id="B0BMX9"/>
<dbReference type="PaxDb" id="10116-ENSRNOP00000057290"/>
<dbReference type="Ensembl" id="ENSRNOT00000060551.3">
    <property type="protein sequence ID" value="ENSRNOP00000057290.2"/>
    <property type="gene ID" value="ENSRNOG00000014711.5"/>
</dbReference>
<dbReference type="GeneID" id="685099"/>
<dbReference type="KEGG" id="rno:685099"/>
<dbReference type="AGR" id="RGD:1583204"/>
<dbReference type="CTD" id="254528"/>
<dbReference type="RGD" id="1583204">
    <property type="gene designation" value="Meiob"/>
</dbReference>
<dbReference type="eggNOG" id="KOG0851">
    <property type="taxonomic scope" value="Eukaryota"/>
</dbReference>
<dbReference type="GeneTree" id="ENSGT00390000001723"/>
<dbReference type="HOGENOM" id="CLU_042457_2_0_1"/>
<dbReference type="InParanoid" id="B0BMX9"/>
<dbReference type="OMA" id="IYLKFVV"/>
<dbReference type="OrthoDB" id="9937820at2759"/>
<dbReference type="PhylomeDB" id="B0BMX9"/>
<dbReference type="TreeFam" id="TF323670"/>
<dbReference type="PRO" id="PR:B0BMX9"/>
<dbReference type="Proteomes" id="UP000002494">
    <property type="component" value="Chromosome 10"/>
</dbReference>
<dbReference type="Bgee" id="ENSRNOG00000014711">
    <property type="expression patterns" value="Expressed in testis and 4 other cell types or tissues"/>
</dbReference>
<dbReference type="GO" id="GO:0005694">
    <property type="term" value="C:chromosome"/>
    <property type="evidence" value="ECO:0007669"/>
    <property type="project" value="UniProtKB-SubCell"/>
</dbReference>
<dbReference type="GO" id="GO:0005737">
    <property type="term" value="C:cytoplasm"/>
    <property type="evidence" value="ECO:0000250"/>
    <property type="project" value="UniProtKB"/>
</dbReference>
<dbReference type="GO" id="GO:0005634">
    <property type="term" value="C:nucleus"/>
    <property type="evidence" value="ECO:0000250"/>
    <property type="project" value="UniProtKB"/>
</dbReference>
<dbReference type="GO" id="GO:0003682">
    <property type="term" value="F:chromatin binding"/>
    <property type="evidence" value="ECO:0000250"/>
    <property type="project" value="UniProtKB"/>
</dbReference>
<dbReference type="GO" id="GO:0008310">
    <property type="term" value="F:single-stranded DNA 3'-5' DNA exonuclease activity"/>
    <property type="evidence" value="ECO:0000250"/>
    <property type="project" value="UniProtKB"/>
</dbReference>
<dbReference type="GO" id="GO:0003697">
    <property type="term" value="F:single-stranded DNA binding"/>
    <property type="evidence" value="ECO:0000250"/>
    <property type="project" value="UniProtKB"/>
</dbReference>
<dbReference type="GO" id="GO:0000724">
    <property type="term" value="P:double-strand break repair via homologous recombination"/>
    <property type="evidence" value="ECO:0000250"/>
    <property type="project" value="UniProtKB"/>
</dbReference>
<dbReference type="GO" id="GO:0007144">
    <property type="term" value="P:female meiosis I"/>
    <property type="evidence" value="ECO:0000250"/>
    <property type="project" value="UniProtKB"/>
</dbReference>
<dbReference type="GO" id="GO:0009566">
    <property type="term" value="P:fertilization"/>
    <property type="evidence" value="ECO:0000250"/>
    <property type="project" value="UniProtKB"/>
</dbReference>
<dbReference type="GO" id="GO:0007129">
    <property type="term" value="P:homologous chromosome pairing at meiosis"/>
    <property type="evidence" value="ECO:0000250"/>
    <property type="project" value="UniProtKB"/>
</dbReference>
<dbReference type="GO" id="GO:0007141">
    <property type="term" value="P:male meiosis I"/>
    <property type="evidence" value="ECO:0000266"/>
    <property type="project" value="RGD"/>
</dbReference>
<dbReference type="GO" id="GO:0007140">
    <property type="term" value="P:male meiotic nuclear division"/>
    <property type="evidence" value="ECO:0000250"/>
    <property type="project" value="UniProtKB"/>
</dbReference>
<dbReference type="GO" id="GO:0000712">
    <property type="term" value="P:resolution of meiotic recombination intermediates"/>
    <property type="evidence" value="ECO:0000250"/>
    <property type="project" value="UniProtKB"/>
</dbReference>
<dbReference type="CDD" id="cd04475">
    <property type="entry name" value="RPA1_DBD_B"/>
    <property type="match status" value="1"/>
</dbReference>
<dbReference type="FunFam" id="2.40.50.140:FF:000239">
    <property type="entry name" value="Meiosis specific with OB domains"/>
    <property type="match status" value="1"/>
</dbReference>
<dbReference type="FunFam" id="2.40.50.140:FF:000248">
    <property type="entry name" value="Meiosis specific with OB domains"/>
    <property type="match status" value="1"/>
</dbReference>
<dbReference type="FunFam" id="2.40.50.140:FF:000171">
    <property type="entry name" value="meiosis-specific with OB domain-containing protein isoform X1"/>
    <property type="match status" value="1"/>
</dbReference>
<dbReference type="Gene3D" id="2.40.50.140">
    <property type="entry name" value="Nucleic acid-binding proteins"/>
    <property type="match status" value="3"/>
</dbReference>
<dbReference type="InterPro" id="IPR052469">
    <property type="entry name" value="MEIOB"/>
</dbReference>
<dbReference type="InterPro" id="IPR012340">
    <property type="entry name" value="NA-bd_OB-fold"/>
</dbReference>
<dbReference type="InterPro" id="IPR056880">
    <property type="entry name" value="OB_MEIOB_N"/>
</dbReference>
<dbReference type="PANTHER" id="PTHR21166">
    <property type="entry name" value="CELL DIVISION CONTROL PROTEIN 24 OB DOMAIN-CONTAINING PROTEIN-RELATED"/>
    <property type="match status" value="1"/>
</dbReference>
<dbReference type="PANTHER" id="PTHR21166:SF2">
    <property type="entry name" value="CELL DIVISION CONTROL PROTEIN 24 OB DOMAIN-CONTAINING PROTEIN-RELATED"/>
    <property type="match status" value="1"/>
</dbReference>
<dbReference type="Pfam" id="PF24903">
    <property type="entry name" value="OB_MEIOB_N"/>
    <property type="match status" value="1"/>
</dbReference>
<dbReference type="SUPFAM" id="SSF50249">
    <property type="entry name" value="Nucleic acid-binding proteins"/>
    <property type="match status" value="3"/>
</dbReference>
<comment type="function">
    <text evidence="2">Single-stranded DNA-binding protein required for homologous recombination in meiosis I. Required for double strand breaks (DSBs) repair and crossover formation and promotion of faithful and complete synapsis. Not required for the initial loading of recombinases but required to maintain a proper number of RAD51 and DMC1 foci after the zygotene stage. May act by ensuring the stabilization of recombinases, which is required for successful homology search and meiotic recombination. Displays Single-stranded DNA 3'-5' exonuclease activity in vitro.</text>
</comment>
<comment type="subunit">
    <text evidence="1 2">Component of a multiprotein complex with RPA2 and SPATA22. Interacts with SPATA22 (By similarity). Interacts with the complex BRME1:HSF2BP:BRCA2.</text>
</comment>
<comment type="subcellular location">
    <subcellularLocation>
        <location evidence="2">Cytoplasm</location>
    </subcellularLocation>
    <subcellularLocation>
        <location evidence="2">Nucleus</location>
    </subcellularLocation>
    <subcellularLocation>
        <location evidence="2">Chromosome</location>
    </subcellularLocation>
    <text evidence="2">Co-localizes with the RPA complex on meiotic chromosome axes. Accumulates on resected DNA. Localization is dependent on SPATA22.</text>
</comment>
<comment type="similarity">
    <text evidence="3">Belongs to the MEIOB family.</text>
</comment>
<organism>
    <name type="scientific">Rattus norvegicus</name>
    <name type="common">Rat</name>
    <dbReference type="NCBI Taxonomy" id="10116"/>
    <lineage>
        <taxon>Eukaryota</taxon>
        <taxon>Metazoa</taxon>
        <taxon>Chordata</taxon>
        <taxon>Craniata</taxon>
        <taxon>Vertebrata</taxon>
        <taxon>Euteleostomi</taxon>
        <taxon>Mammalia</taxon>
        <taxon>Eutheria</taxon>
        <taxon>Euarchontoglires</taxon>
        <taxon>Glires</taxon>
        <taxon>Rodentia</taxon>
        <taxon>Myomorpha</taxon>
        <taxon>Muroidea</taxon>
        <taxon>Muridae</taxon>
        <taxon>Murinae</taxon>
        <taxon>Rattus</taxon>
    </lineage>
</organism>
<sequence>MAKFFALKNFTALSDLHPNMANLKIIGIVIGKTDVKGFPDRKNIGSERYTFSFTIRDSPNHFVNVSSWGSEDYIRSLSDNFKVGECVIIENPLIQRKETEREERFSPATPSNYKLLLSENHSMVKVCSPYEVDTKLLSLIHLPVKESRDYYSLADIVANGHSLDGRIINVLAAVRSVGEPKYFTTSDRRKGQRCEVKLFDETEPSFTMTCWDNESILLAQSWMARETVIFASDVRINFNKFQNCMAATVISKTIITVNPDTPEANILLNFIRENKETSIADEIDSYLKESVNLNTIVNVYTVEQLKGKALENEGKVDPFYGILYAYISTLNIDDETTKVVRNRCSSCGYIVNDASNTCTICSKDSSRSRSFCLSFDVLVDLTDHTGTLRSCSLSGSVAEETLGCTINEFLTMTSEQKTKLKWQLLLERSKIYLKLILSHRARGGLKVTILSCKLADPIEASRDLAGQGHT</sequence>
<keyword id="KW-0158">Chromosome</keyword>
<keyword id="KW-0963">Cytoplasm</keyword>
<keyword id="KW-0238">DNA-binding</keyword>
<keyword id="KW-0269">Exonuclease</keyword>
<keyword id="KW-0378">Hydrolase</keyword>
<keyword id="KW-0469">Meiosis</keyword>
<keyword id="KW-0540">Nuclease</keyword>
<keyword id="KW-0539">Nucleus</keyword>
<keyword id="KW-1185">Reference proteome</keyword>
<evidence type="ECO:0000250" key="1">
    <source>
        <dbReference type="UniProtKB" id="Q8N635"/>
    </source>
</evidence>
<evidence type="ECO:0000250" key="2">
    <source>
        <dbReference type="UniProtKB" id="Q9D513"/>
    </source>
</evidence>
<evidence type="ECO:0000305" key="3"/>
<evidence type="ECO:0000312" key="4">
    <source>
        <dbReference type="RGD" id="1583204"/>
    </source>
</evidence>
<feature type="chain" id="PRO_0000337137" description="Meiosis-specific with OB domain-containing protein">
    <location>
        <begin position="1"/>
        <end position="470"/>
    </location>
</feature>
<feature type="DNA-binding region" description="OB">
    <location>
        <begin position="167"/>
        <end position="272"/>
    </location>
</feature>
<accession>B0BMX9</accession>
<gene>
    <name evidence="4" type="primary">Meiob</name>
</gene>